<reference key="1">
    <citation type="journal article" date="2008" name="PLoS ONE">
        <title>Genome sequence of a lancefield group C Streptococcus zooepidemicus strain causing epidemic nephritis: new information about an old disease.</title>
        <authorList>
            <person name="Beres S.B."/>
            <person name="Sesso R."/>
            <person name="Pinto S.W.L."/>
            <person name="Hoe N.P."/>
            <person name="Porcella S.F."/>
            <person name="Deleo F.R."/>
            <person name="Musser J.M."/>
        </authorList>
    </citation>
    <scope>NUCLEOTIDE SEQUENCE [LARGE SCALE GENOMIC DNA]</scope>
    <source>
        <strain>MGCS10565</strain>
    </source>
</reference>
<evidence type="ECO:0000255" key="1">
    <source>
        <dbReference type="HAMAP-Rule" id="MF_00636"/>
    </source>
</evidence>
<name>Y730_STREM</name>
<dbReference type="EMBL" id="CP001129">
    <property type="protein sequence ID" value="ACG62093.1"/>
    <property type="molecule type" value="Genomic_DNA"/>
</dbReference>
<dbReference type="SMR" id="B4U276"/>
<dbReference type="KEGG" id="sez:Sez_0730"/>
<dbReference type="HOGENOM" id="CLU_059558_0_0_9"/>
<dbReference type="Proteomes" id="UP000001873">
    <property type="component" value="Chromosome"/>
</dbReference>
<dbReference type="GO" id="GO:0005524">
    <property type="term" value="F:ATP binding"/>
    <property type="evidence" value="ECO:0007669"/>
    <property type="project" value="UniProtKB-UniRule"/>
</dbReference>
<dbReference type="GO" id="GO:0005525">
    <property type="term" value="F:GTP binding"/>
    <property type="evidence" value="ECO:0007669"/>
    <property type="project" value="UniProtKB-UniRule"/>
</dbReference>
<dbReference type="Gene3D" id="3.40.50.300">
    <property type="entry name" value="P-loop containing nucleotide triphosphate hydrolases"/>
    <property type="match status" value="1"/>
</dbReference>
<dbReference type="HAMAP" id="MF_00636">
    <property type="entry name" value="RapZ_like"/>
    <property type="match status" value="1"/>
</dbReference>
<dbReference type="InterPro" id="IPR027417">
    <property type="entry name" value="P-loop_NTPase"/>
</dbReference>
<dbReference type="InterPro" id="IPR005337">
    <property type="entry name" value="RapZ-like"/>
</dbReference>
<dbReference type="InterPro" id="IPR053930">
    <property type="entry name" value="RapZ-like_N"/>
</dbReference>
<dbReference type="InterPro" id="IPR053931">
    <property type="entry name" value="RapZ_C"/>
</dbReference>
<dbReference type="NCBIfam" id="NF003828">
    <property type="entry name" value="PRK05416.1"/>
    <property type="match status" value="1"/>
</dbReference>
<dbReference type="PANTHER" id="PTHR30448">
    <property type="entry name" value="RNASE ADAPTER PROTEIN RAPZ"/>
    <property type="match status" value="1"/>
</dbReference>
<dbReference type="PANTHER" id="PTHR30448:SF0">
    <property type="entry name" value="RNASE ADAPTER PROTEIN RAPZ"/>
    <property type="match status" value="1"/>
</dbReference>
<dbReference type="Pfam" id="PF22740">
    <property type="entry name" value="PapZ_C"/>
    <property type="match status" value="1"/>
</dbReference>
<dbReference type="Pfam" id="PF03668">
    <property type="entry name" value="RapZ-like_N"/>
    <property type="match status" value="1"/>
</dbReference>
<dbReference type="PIRSF" id="PIRSF005052">
    <property type="entry name" value="P-loopkin"/>
    <property type="match status" value="1"/>
</dbReference>
<dbReference type="SUPFAM" id="SSF52540">
    <property type="entry name" value="P-loop containing nucleoside triphosphate hydrolases"/>
    <property type="match status" value="1"/>
</dbReference>
<comment type="function">
    <text evidence="1">Displays ATPase and GTPase activities.</text>
</comment>
<comment type="similarity">
    <text evidence="1">Belongs to the RapZ-like family.</text>
</comment>
<protein>
    <recommendedName>
        <fullName evidence="1">Nucleotide-binding protein Sez_0730</fullName>
    </recommendedName>
</protein>
<proteinExistence type="inferred from homology"/>
<keyword id="KW-0067">ATP-binding</keyword>
<keyword id="KW-0342">GTP-binding</keyword>
<keyword id="KW-0547">Nucleotide-binding</keyword>
<gene>
    <name type="ordered locus">Sez_0730</name>
</gene>
<feature type="chain" id="PRO_1000130786" description="Nucleotide-binding protein Sez_0730">
    <location>
        <begin position="1"/>
        <end position="296"/>
    </location>
</feature>
<feature type="binding site" evidence="1">
    <location>
        <begin position="13"/>
        <end position="20"/>
    </location>
    <ligand>
        <name>ATP</name>
        <dbReference type="ChEBI" id="CHEBI:30616"/>
    </ligand>
</feature>
<feature type="binding site" evidence="1">
    <location>
        <begin position="63"/>
        <end position="66"/>
    </location>
    <ligand>
        <name>GTP</name>
        <dbReference type="ChEBI" id="CHEBI:37565"/>
    </ligand>
</feature>
<organism>
    <name type="scientific">Streptococcus equi subsp. zooepidemicus (strain MGCS10565)</name>
    <dbReference type="NCBI Taxonomy" id="552526"/>
    <lineage>
        <taxon>Bacteria</taxon>
        <taxon>Bacillati</taxon>
        <taxon>Bacillota</taxon>
        <taxon>Bacilli</taxon>
        <taxon>Lactobacillales</taxon>
        <taxon>Streptococcaceae</taxon>
        <taxon>Streptococcus</taxon>
    </lineage>
</organism>
<accession>B4U276</accession>
<sequence>MSDKQINLVIVTGMSGAGKTVAIQSFEDLGYFTVDNMPPALVPKFLELLERTNETQKVALVVDMRSRRFFKEINSILDHIELNANLKLRILFLDATDSELVSRYKETRRSHPLAADGRVLDGIRRERELLVPLKSMSQHVVNTTDLTPRQLRKVISDQFSSESDQASFRIEVMSFGFKYGLPLDADLVFDVRFLPNPYYQVALREQTGLDQAVFDYVMTHQESEAFYNHLLGLIVPILPAYQKEGKSVLTIAIGCTGGQHRSVAFAHRLAQDLTADWPLHESHRDINRRKETVNRS</sequence>